<protein>
    <recommendedName>
        <fullName evidence="1">Large ribosomal subunit protein uL14</fullName>
    </recommendedName>
    <alternativeName>
        <fullName evidence="2">50S ribosomal protein L14</fullName>
    </alternativeName>
</protein>
<feature type="chain" id="PRO_1000055588" description="Large ribosomal subunit protein uL14">
    <location>
        <begin position="1"/>
        <end position="122"/>
    </location>
</feature>
<accession>Q0BUP0</accession>
<name>RL14_GRABC</name>
<proteinExistence type="inferred from homology"/>
<evidence type="ECO:0000255" key="1">
    <source>
        <dbReference type="HAMAP-Rule" id="MF_01367"/>
    </source>
</evidence>
<evidence type="ECO:0000305" key="2"/>
<comment type="function">
    <text evidence="1">Binds to 23S rRNA. Forms part of two intersubunit bridges in the 70S ribosome.</text>
</comment>
<comment type="subunit">
    <text evidence="1">Part of the 50S ribosomal subunit. Forms a cluster with proteins L3 and L19. In the 70S ribosome, L14 and L19 interact and together make contacts with the 16S rRNA in bridges B5 and B8.</text>
</comment>
<comment type="similarity">
    <text evidence="1">Belongs to the universal ribosomal protein uL14 family.</text>
</comment>
<reference key="1">
    <citation type="journal article" date="2007" name="J. Bacteriol.">
        <title>Genome sequence analysis of the emerging human pathogenic acetic acid bacterium Granulibacter bethesdensis.</title>
        <authorList>
            <person name="Greenberg D.E."/>
            <person name="Porcella S.F."/>
            <person name="Zelazny A.M."/>
            <person name="Virtaneva K."/>
            <person name="Sturdevant D.E."/>
            <person name="Kupko J.J. III"/>
            <person name="Barbian K.D."/>
            <person name="Babar A."/>
            <person name="Dorward D.W."/>
            <person name="Holland S.M."/>
        </authorList>
    </citation>
    <scope>NUCLEOTIDE SEQUENCE [LARGE SCALE GENOMIC DNA]</scope>
    <source>
        <strain>ATCC BAA-1260 / CGDNIH1</strain>
    </source>
</reference>
<dbReference type="EMBL" id="CP000394">
    <property type="protein sequence ID" value="ABI61462.1"/>
    <property type="molecule type" value="Genomic_DNA"/>
</dbReference>
<dbReference type="RefSeq" id="WP_011631271.1">
    <property type="nucleotide sequence ID" value="NC_008343.2"/>
</dbReference>
<dbReference type="SMR" id="Q0BUP0"/>
<dbReference type="STRING" id="391165.GbCGDNIH1_0564"/>
<dbReference type="GeneID" id="69744817"/>
<dbReference type="KEGG" id="gbe:GbCGDNIH1_0564"/>
<dbReference type="eggNOG" id="COG0093">
    <property type="taxonomic scope" value="Bacteria"/>
</dbReference>
<dbReference type="HOGENOM" id="CLU_095071_2_1_5"/>
<dbReference type="OrthoDB" id="9806379at2"/>
<dbReference type="Proteomes" id="UP000001963">
    <property type="component" value="Chromosome"/>
</dbReference>
<dbReference type="GO" id="GO:0022625">
    <property type="term" value="C:cytosolic large ribosomal subunit"/>
    <property type="evidence" value="ECO:0007669"/>
    <property type="project" value="TreeGrafter"/>
</dbReference>
<dbReference type="GO" id="GO:0070180">
    <property type="term" value="F:large ribosomal subunit rRNA binding"/>
    <property type="evidence" value="ECO:0007669"/>
    <property type="project" value="TreeGrafter"/>
</dbReference>
<dbReference type="GO" id="GO:0003735">
    <property type="term" value="F:structural constituent of ribosome"/>
    <property type="evidence" value="ECO:0007669"/>
    <property type="project" value="InterPro"/>
</dbReference>
<dbReference type="GO" id="GO:0006412">
    <property type="term" value="P:translation"/>
    <property type="evidence" value="ECO:0007669"/>
    <property type="project" value="UniProtKB-UniRule"/>
</dbReference>
<dbReference type="CDD" id="cd00337">
    <property type="entry name" value="Ribosomal_uL14"/>
    <property type="match status" value="1"/>
</dbReference>
<dbReference type="FunFam" id="2.40.150.20:FF:000001">
    <property type="entry name" value="50S ribosomal protein L14"/>
    <property type="match status" value="1"/>
</dbReference>
<dbReference type="Gene3D" id="2.40.150.20">
    <property type="entry name" value="Ribosomal protein L14"/>
    <property type="match status" value="1"/>
</dbReference>
<dbReference type="HAMAP" id="MF_01367">
    <property type="entry name" value="Ribosomal_uL14"/>
    <property type="match status" value="1"/>
</dbReference>
<dbReference type="InterPro" id="IPR000218">
    <property type="entry name" value="Ribosomal_uL14"/>
</dbReference>
<dbReference type="InterPro" id="IPR005745">
    <property type="entry name" value="Ribosomal_uL14_bac-type"/>
</dbReference>
<dbReference type="InterPro" id="IPR019972">
    <property type="entry name" value="Ribosomal_uL14_CS"/>
</dbReference>
<dbReference type="InterPro" id="IPR036853">
    <property type="entry name" value="Ribosomal_uL14_sf"/>
</dbReference>
<dbReference type="NCBIfam" id="TIGR01067">
    <property type="entry name" value="rplN_bact"/>
    <property type="match status" value="1"/>
</dbReference>
<dbReference type="PANTHER" id="PTHR11761">
    <property type="entry name" value="50S/60S RIBOSOMAL PROTEIN L14/L23"/>
    <property type="match status" value="1"/>
</dbReference>
<dbReference type="PANTHER" id="PTHR11761:SF3">
    <property type="entry name" value="LARGE RIBOSOMAL SUBUNIT PROTEIN UL14M"/>
    <property type="match status" value="1"/>
</dbReference>
<dbReference type="Pfam" id="PF00238">
    <property type="entry name" value="Ribosomal_L14"/>
    <property type="match status" value="1"/>
</dbReference>
<dbReference type="SMART" id="SM01374">
    <property type="entry name" value="Ribosomal_L14"/>
    <property type="match status" value="1"/>
</dbReference>
<dbReference type="SUPFAM" id="SSF50193">
    <property type="entry name" value="Ribosomal protein L14"/>
    <property type="match status" value="1"/>
</dbReference>
<dbReference type="PROSITE" id="PS00049">
    <property type="entry name" value="RIBOSOMAL_L14"/>
    <property type="match status" value="1"/>
</dbReference>
<keyword id="KW-1185">Reference proteome</keyword>
<keyword id="KW-0687">Ribonucleoprotein</keyword>
<keyword id="KW-0689">Ribosomal protein</keyword>
<keyword id="KW-0694">RNA-binding</keyword>
<keyword id="KW-0699">rRNA-binding</keyword>
<gene>
    <name evidence="1" type="primary">rplN</name>
    <name type="ordered locus">GbCGDNIH1_0564</name>
</gene>
<organism>
    <name type="scientific">Granulibacter bethesdensis (strain ATCC BAA-1260 / CGDNIH1)</name>
    <dbReference type="NCBI Taxonomy" id="391165"/>
    <lineage>
        <taxon>Bacteria</taxon>
        <taxon>Pseudomonadati</taxon>
        <taxon>Pseudomonadota</taxon>
        <taxon>Alphaproteobacteria</taxon>
        <taxon>Acetobacterales</taxon>
        <taxon>Acetobacteraceae</taxon>
        <taxon>Granulibacter</taxon>
    </lineage>
</organism>
<sequence length="122" mass="13365">MIHPETNLEVADNSGARRVQCIKVLGGSKRKTASVGDVIVVSVKEAIPRGKVKKGDVHQAVIVRTSFPVRRADGSAIRFDRNAAVLINKQQEPIGTRIFGPVVRELRGRKFMKIISLAPEVL</sequence>